<name>RL2_NEIMA</name>
<sequence length="277" mass="30098">MAIVKMKPTSAGRRGMVRVVTEGLHKGAPYAPLLEKKNSTAGRNNNGHITTRHKGGGHKHHYRVVDFKRNKDGIPAKVERIEYDPNRTAFIALLCYADGERRYIIAPRGIQAGAVLVSGAEAAIKVGNTLPIRNIPVGTTIHCIEMKPGKGAQIARSAGASAVLLAKEGAYAQVRLRSGEVRKINVNCRATIGEVGNEEQSLKKIGKAGANRWRGIRPTVRGVVMNPVDHPHGGGEGRTGEAREPVSPWGTPAKGYRTRNNKRTDNMIVRRRYSNKG</sequence>
<feature type="chain" id="PRO_0000129588" description="Large ribosomal subunit protein uL2">
    <location>
        <begin position="1"/>
        <end position="277"/>
    </location>
</feature>
<feature type="region of interest" description="Disordered" evidence="2">
    <location>
        <begin position="37"/>
        <end position="60"/>
    </location>
</feature>
<feature type="region of interest" description="Disordered" evidence="2">
    <location>
        <begin position="223"/>
        <end position="265"/>
    </location>
</feature>
<feature type="compositionally biased region" description="Polar residues" evidence="2">
    <location>
        <begin position="39"/>
        <end position="49"/>
    </location>
</feature>
<feature type="compositionally biased region" description="Basic residues" evidence="2">
    <location>
        <begin position="50"/>
        <end position="60"/>
    </location>
</feature>
<feature type="compositionally biased region" description="Basic and acidic residues" evidence="2">
    <location>
        <begin position="229"/>
        <end position="244"/>
    </location>
</feature>
<proteinExistence type="inferred from homology"/>
<evidence type="ECO:0000255" key="1">
    <source>
        <dbReference type="HAMAP-Rule" id="MF_01320"/>
    </source>
</evidence>
<evidence type="ECO:0000256" key="2">
    <source>
        <dbReference type="SAM" id="MobiDB-lite"/>
    </source>
</evidence>
<evidence type="ECO:0000305" key="3"/>
<accession>Q9JX12</accession>
<accession>A1INY7</accession>
<comment type="function">
    <text evidence="1">One of the primary rRNA binding proteins. Required for association of the 30S and 50S subunits to form the 70S ribosome, for tRNA binding and peptide bond formation. It has been suggested to have peptidyltransferase activity; this is somewhat controversial. Makes several contacts with the 16S rRNA in the 70S ribosome.</text>
</comment>
<comment type="subunit">
    <text evidence="1">Part of the 50S ribosomal subunit. Forms a bridge to the 30S subunit in the 70S ribosome.</text>
</comment>
<comment type="similarity">
    <text evidence="1">Belongs to the universal ribosomal protein uL2 family.</text>
</comment>
<keyword id="KW-0687">Ribonucleoprotein</keyword>
<keyword id="KW-0689">Ribosomal protein</keyword>
<keyword id="KW-0694">RNA-binding</keyword>
<keyword id="KW-0699">rRNA-binding</keyword>
<organism>
    <name type="scientific">Neisseria meningitidis serogroup A / serotype 4A (strain DSM 15465 / Z2491)</name>
    <dbReference type="NCBI Taxonomy" id="122587"/>
    <lineage>
        <taxon>Bacteria</taxon>
        <taxon>Pseudomonadati</taxon>
        <taxon>Pseudomonadota</taxon>
        <taxon>Betaproteobacteria</taxon>
        <taxon>Neisseriales</taxon>
        <taxon>Neisseriaceae</taxon>
        <taxon>Neisseria</taxon>
    </lineage>
</organism>
<dbReference type="EMBL" id="AL157959">
    <property type="protein sequence ID" value="CAM07444.1"/>
    <property type="molecule type" value="Genomic_DNA"/>
</dbReference>
<dbReference type="PIR" id="D82005">
    <property type="entry name" value="D82005"/>
</dbReference>
<dbReference type="RefSeq" id="WP_002215409.1">
    <property type="nucleotide sequence ID" value="NC_003116.1"/>
</dbReference>
<dbReference type="SMR" id="Q9JX12"/>
<dbReference type="EnsemblBacteria" id="CAM07444">
    <property type="protein sequence ID" value="CAM07444"/>
    <property type="gene ID" value="NMA0126"/>
</dbReference>
<dbReference type="KEGG" id="nma:NMA0126"/>
<dbReference type="HOGENOM" id="CLU_036235_2_1_4"/>
<dbReference type="Proteomes" id="UP000000626">
    <property type="component" value="Chromosome"/>
</dbReference>
<dbReference type="GO" id="GO:0015934">
    <property type="term" value="C:large ribosomal subunit"/>
    <property type="evidence" value="ECO:0007669"/>
    <property type="project" value="InterPro"/>
</dbReference>
<dbReference type="GO" id="GO:0019843">
    <property type="term" value="F:rRNA binding"/>
    <property type="evidence" value="ECO:0007669"/>
    <property type="project" value="UniProtKB-UniRule"/>
</dbReference>
<dbReference type="GO" id="GO:0003735">
    <property type="term" value="F:structural constituent of ribosome"/>
    <property type="evidence" value="ECO:0007669"/>
    <property type="project" value="InterPro"/>
</dbReference>
<dbReference type="GO" id="GO:0016740">
    <property type="term" value="F:transferase activity"/>
    <property type="evidence" value="ECO:0007669"/>
    <property type="project" value="InterPro"/>
</dbReference>
<dbReference type="GO" id="GO:0002181">
    <property type="term" value="P:cytoplasmic translation"/>
    <property type="evidence" value="ECO:0007669"/>
    <property type="project" value="TreeGrafter"/>
</dbReference>
<dbReference type="FunFam" id="2.30.30.30:FF:000001">
    <property type="entry name" value="50S ribosomal protein L2"/>
    <property type="match status" value="1"/>
</dbReference>
<dbReference type="FunFam" id="2.40.50.140:FF:000003">
    <property type="entry name" value="50S ribosomal protein L2"/>
    <property type="match status" value="1"/>
</dbReference>
<dbReference type="FunFam" id="4.10.950.10:FF:000001">
    <property type="entry name" value="50S ribosomal protein L2"/>
    <property type="match status" value="1"/>
</dbReference>
<dbReference type="Gene3D" id="2.30.30.30">
    <property type="match status" value="1"/>
</dbReference>
<dbReference type="Gene3D" id="2.40.50.140">
    <property type="entry name" value="Nucleic acid-binding proteins"/>
    <property type="match status" value="1"/>
</dbReference>
<dbReference type="Gene3D" id="4.10.950.10">
    <property type="entry name" value="Ribosomal protein L2, domain 3"/>
    <property type="match status" value="1"/>
</dbReference>
<dbReference type="HAMAP" id="MF_01320_B">
    <property type="entry name" value="Ribosomal_uL2_B"/>
    <property type="match status" value="1"/>
</dbReference>
<dbReference type="InterPro" id="IPR012340">
    <property type="entry name" value="NA-bd_OB-fold"/>
</dbReference>
<dbReference type="InterPro" id="IPR014722">
    <property type="entry name" value="Rib_uL2_dom2"/>
</dbReference>
<dbReference type="InterPro" id="IPR002171">
    <property type="entry name" value="Ribosomal_uL2"/>
</dbReference>
<dbReference type="InterPro" id="IPR005880">
    <property type="entry name" value="Ribosomal_uL2_bac/org-type"/>
</dbReference>
<dbReference type="InterPro" id="IPR022669">
    <property type="entry name" value="Ribosomal_uL2_C"/>
</dbReference>
<dbReference type="InterPro" id="IPR022671">
    <property type="entry name" value="Ribosomal_uL2_CS"/>
</dbReference>
<dbReference type="InterPro" id="IPR014726">
    <property type="entry name" value="Ribosomal_uL2_dom3"/>
</dbReference>
<dbReference type="InterPro" id="IPR022666">
    <property type="entry name" value="Ribosomal_uL2_RNA-bd_dom"/>
</dbReference>
<dbReference type="InterPro" id="IPR008991">
    <property type="entry name" value="Translation_prot_SH3-like_sf"/>
</dbReference>
<dbReference type="NCBIfam" id="TIGR01171">
    <property type="entry name" value="rplB_bact"/>
    <property type="match status" value="1"/>
</dbReference>
<dbReference type="PANTHER" id="PTHR13691:SF5">
    <property type="entry name" value="LARGE RIBOSOMAL SUBUNIT PROTEIN UL2M"/>
    <property type="match status" value="1"/>
</dbReference>
<dbReference type="PANTHER" id="PTHR13691">
    <property type="entry name" value="RIBOSOMAL PROTEIN L2"/>
    <property type="match status" value="1"/>
</dbReference>
<dbReference type="Pfam" id="PF00181">
    <property type="entry name" value="Ribosomal_L2"/>
    <property type="match status" value="1"/>
</dbReference>
<dbReference type="Pfam" id="PF03947">
    <property type="entry name" value="Ribosomal_L2_C"/>
    <property type="match status" value="1"/>
</dbReference>
<dbReference type="PIRSF" id="PIRSF002158">
    <property type="entry name" value="Ribosomal_L2"/>
    <property type="match status" value="1"/>
</dbReference>
<dbReference type="SMART" id="SM01383">
    <property type="entry name" value="Ribosomal_L2"/>
    <property type="match status" value="1"/>
</dbReference>
<dbReference type="SMART" id="SM01382">
    <property type="entry name" value="Ribosomal_L2_C"/>
    <property type="match status" value="1"/>
</dbReference>
<dbReference type="SUPFAM" id="SSF50249">
    <property type="entry name" value="Nucleic acid-binding proteins"/>
    <property type="match status" value="1"/>
</dbReference>
<dbReference type="SUPFAM" id="SSF50104">
    <property type="entry name" value="Translation proteins SH3-like domain"/>
    <property type="match status" value="1"/>
</dbReference>
<dbReference type="PROSITE" id="PS00467">
    <property type="entry name" value="RIBOSOMAL_L2"/>
    <property type="match status" value="1"/>
</dbReference>
<reference key="1">
    <citation type="journal article" date="2000" name="Nature">
        <title>Complete DNA sequence of a serogroup A strain of Neisseria meningitidis Z2491.</title>
        <authorList>
            <person name="Parkhill J."/>
            <person name="Achtman M."/>
            <person name="James K.D."/>
            <person name="Bentley S.D."/>
            <person name="Churcher C.M."/>
            <person name="Klee S.R."/>
            <person name="Morelli G."/>
            <person name="Basham D."/>
            <person name="Brown D."/>
            <person name="Chillingworth T."/>
            <person name="Davies R.M."/>
            <person name="Davis P."/>
            <person name="Devlin K."/>
            <person name="Feltwell T."/>
            <person name="Hamlin N."/>
            <person name="Holroyd S."/>
            <person name="Jagels K."/>
            <person name="Leather S."/>
            <person name="Moule S."/>
            <person name="Mungall K.L."/>
            <person name="Quail M.A."/>
            <person name="Rajandream M.A."/>
            <person name="Rutherford K.M."/>
            <person name="Simmonds M."/>
            <person name="Skelton J."/>
            <person name="Whitehead S."/>
            <person name="Spratt B.G."/>
            <person name="Barrell B.G."/>
        </authorList>
    </citation>
    <scope>NUCLEOTIDE SEQUENCE [LARGE SCALE GENOMIC DNA]</scope>
    <source>
        <strain>DSM 15465 / Z2491</strain>
    </source>
</reference>
<protein>
    <recommendedName>
        <fullName evidence="1">Large ribosomal subunit protein uL2</fullName>
    </recommendedName>
    <alternativeName>
        <fullName evidence="3">50S ribosomal protein L2</fullName>
    </alternativeName>
</protein>
<gene>
    <name evidence="1" type="primary">rplB</name>
    <name type="ordered locus">NMA0126</name>
</gene>